<name>RPIA_ACIBT</name>
<sequence>MSLYATQDEKKQAAAKAALKHLPKGGILGVGTGSTVNFLIDLLPELQLEAAVASSQATADRLKKLGIEVVDMNHVGSLDAYVDGADEIDRHMHMIKGGGAALTREKIVASIAKKFVCIVDDSKWVDQLGRDFPLPVEVIPMARSAVARKLVSLGGDPVYREGVVTDNGNIILDVFNLNILNAIDLEKTINNIPGVVTNGIFALNPATIAIVATNDGIEERTAQ</sequence>
<reference key="1">
    <citation type="journal article" date="2007" name="Genes Dev.">
        <title>New insights into Acinetobacter baumannii pathogenesis revealed by high-density pyrosequencing and transposon mutagenesis.</title>
        <authorList>
            <person name="Smith M.G."/>
            <person name="Gianoulis T.A."/>
            <person name="Pukatzki S."/>
            <person name="Mekalanos J.J."/>
            <person name="Ornston L.N."/>
            <person name="Gerstein M."/>
            <person name="Snyder M."/>
        </authorList>
    </citation>
    <scope>NUCLEOTIDE SEQUENCE [LARGE SCALE GENOMIC DNA]</scope>
    <source>
        <strain>ATCC 17978 / DSM 105126 / CIP 53.77 / LMG 1025 / NCDC KC755 / 5377</strain>
    </source>
</reference>
<evidence type="ECO:0000255" key="1">
    <source>
        <dbReference type="HAMAP-Rule" id="MF_00170"/>
    </source>
</evidence>
<accession>A3M5Z8</accession>
<organism>
    <name type="scientific">Acinetobacter baumannii (strain ATCC 17978 / DSM 105126 / CIP 53.77 / LMG 1025 / NCDC KC755 / 5377)</name>
    <dbReference type="NCBI Taxonomy" id="400667"/>
    <lineage>
        <taxon>Bacteria</taxon>
        <taxon>Pseudomonadati</taxon>
        <taxon>Pseudomonadota</taxon>
        <taxon>Gammaproteobacteria</taxon>
        <taxon>Moraxellales</taxon>
        <taxon>Moraxellaceae</taxon>
        <taxon>Acinetobacter</taxon>
        <taxon>Acinetobacter calcoaceticus/baumannii complex</taxon>
    </lineage>
</organism>
<keyword id="KW-0413">Isomerase</keyword>
<comment type="function">
    <text evidence="1">Catalyzes the reversible conversion of ribose-5-phosphate to ribulose 5-phosphate.</text>
</comment>
<comment type="catalytic activity">
    <reaction evidence="1">
        <text>aldehydo-D-ribose 5-phosphate = D-ribulose 5-phosphate</text>
        <dbReference type="Rhea" id="RHEA:14657"/>
        <dbReference type="ChEBI" id="CHEBI:58121"/>
        <dbReference type="ChEBI" id="CHEBI:58273"/>
        <dbReference type="EC" id="5.3.1.6"/>
    </reaction>
</comment>
<comment type="pathway">
    <text evidence="1">Carbohydrate degradation; pentose phosphate pathway; D-ribose 5-phosphate from D-ribulose 5-phosphate (non-oxidative stage): step 1/1.</text>
</comment>
<comment type="subunit">
    <text evidence="1">Homodimer.</text>
</comment>
<comment type="similarity">
    <text evidence="1">Belongs to the ribose 5-phosphate isomerase family.</text>
</comment>
<feature type="chain" id="PRO_1000097641" description="Ribose-5-phosphate isomerase A">
    <location>
        <begin position="1"/>
        <end position="223"/>
    </location>
</feature>
<feature type="active site" description="Proton acceptor" evidence="1">
    <location>
        <position position="105"/>
    </location>
</feature>
<feature type="binding site" evidence="1">
    <location>
        <begin position="32"/>
        <end position="35"/>
    </location>
    <ligand>
        <name>substrate</name>
    </ligand>
</feature>
<feature type="binding site" evidence="1">
    <location>
        <begin position="83"/>
        <end position="86"/>
    </location>
    <ligand>
        <name>substrate</name>
    </ligand>
</feature>
<feature type="binding site" evidence="1">
    <location>
        <begin position="96"/>
        <end position="99"/>
    </location>
    <ligand>
        <name>substrate</name>
    </ligand>
</feature>
<feature type="binding site" evidence="1">
    <location>
        <position position="123"/>
    </location>
    <ligand>
        <name>substrate</name>
    </ligand>
</feature>
<dbReference type="EC" id="5.3.1.6" evidence="1"/>
<dbReference type="EMBL" id="CP000521">
    <property type="protein sequence ID" value="ABO12342.2"/>
    <property type="molecule type" value="Genomic_DNA"/>
</dbReference>
<dbReference type="RefSeq" id="WP_000061057.1">
    <property type="nucleotide sequence ID" value="NZ_CACVBA010000001.1"/>
</dbReference>
<dbReference type="SMR" id="A3M5Z8"/>
<dbReference type="KEGG" id="acb:A1S_1915"/>
<dbReference type="HOGENOM" id="CLU_056590_1_1_6"/>
<dbReference type="UniPathway" id="UPA00115">
    <property type="reaction ID" value="UER00412"/>
</dbReference>
<dbReference type="GO" id="GO:0005829">
    <property type="term" value="C:cytosol"/>
    <property type="evidence" value="ECO:0007669"/>
    <property type="project" value="TreeGrafter"/>
</dbReference>
<dbReference type="GO" id="GO:0004751">
    <property type="term" value="F:ribose-5-phosphate isomerase activity"/>
    <property type="evidence" value="ECO:0007669"/>
    <property type="project" value="UniProtKB-UniRule"/>
</dbReference>
<dbReference type="GO" id="GO:0006014">
    <property type="term" value="P:D-ribose metabolic process"/>
    <property type="evidence" value="ECO:0007669"/>
    <property type="project" value="TreeGrafter"/>
</dbReference>
<dbReference type="GO" id="GO:0009052">
    <property type="term" value="P:pentose-phosphate shunt, non-oxidative branch"/>
    <property type="evidence" value="ECO:0007669"/>
    <property type="project" value="UniProtKB-UniRule"/>
</dbReference>
<dbReference type="CDD" id="cd01398">
    <property type="entry name" value="RPI_A"/>
    <property type="match status" value="1"/>
</dbReference>
<dbReference type="FunFam" id="3.30.70.260:FF:000004">
    <property type="entry name" value="Ribose-5-phosphate isomerase A"/>
    <property type="match status" value="1"/>
</dbReference>
<dbReference type="FunFam" id="3.40.50.1360:FF:000001">
    <property type="entry name" value="Ribose-5-phosphate isomerase A"/>
    <property type="match status" value="1"/>
</dbReference>
<dbReference type="Gene3D" id="3.30.70.260">
    <property type="match status" value="1"/>
</dbReference>
<dbReference type="Gene3D" id="3.40.50.1360">
    <property type="match status" value="1"/>
</dbReference>
<dbReference type="HAMAP" id="MF_00170">
    <property type="entry name" value="Rib_5P_isom_A"/>
    <property type="match status" value="1"/>
</dbReference>
<dbReference type="InterPro" id="IPR037171">
    <property type="entry name" value="NagB/RpiA_transferase-like"/>
</dbReference>
<dbReference type="InterPro" id="IPR020672">
    <property type="entry name" value="Ribose5P_isomerase_typA_subgr"/>
</dbReference>
<dbReference type="InterPro" id="IPR004788">
    <property type="entry name" value="Ribose5P_isomerase_type_A"/>
</dbReference>
<dbReference type="NCBIfam" id="NF001924">
    <property type="entry name" value="PRK00702.1"/>
    <property type="match status" value="1"/>
</dbReference>
<dbReference type="NCBIfam" id="TIGR00021">
    <property type="entry name" value="rpiA"/>
    <property type="match status" value="1"/>
</dbReference>
<dbReference type="PANTHER" id="PTHR11934">
    <property type="entry name" value="RIBOSE-5-PHOSPHATE ISOMERASE"/>
    <property type="match status" value="1"/>
</dbReference>
<dbReference type="PANTHER" id="PTHR11934:SF0">
    <property type="entry name" value="RIBOSE-5-PHOSPHATE ISOMERASE"/>
    <property type="match status" value="1"/>
</dbReference>
<dbReference type="Pfam" id="PF06026">
    <property type="entry name" value="Rib_5-P_isom_A"/>
    <property type="match status" value="1"/>
</dbReference>
<dbReference type="SUPFAM" id="SSF75445">
    <property type="entry name" value="D-ribose-5-phosphate isomerase (RpiA), lid domain"/>
    <property type="match status" value="1"/>
</dbReference>
<dbReference type="SUPFAM" id="SSF100950">
    <property type="entry name" value="NagB/RpiA/CoA transferase-like"/>
    <property type="match status" value="1"/>
</dbReference>
<gene>
    <name evidence="1" type="primary">rpiA</name>
    <name type="ordered locus">A1S_1915</name>
</gene>
<proteinExistence type="inferred from homology"/>
<protein>
    <recommendedName>
        <fullName evidence="1">Ribose-5-phosphate isomerase A</fullName>
        <ecNumber evidence="1">5.3.1.6</ecNumber>
    </recommendedName>
    <alternativeName>
        <fullName evidence="1">Phosphoriboisomerase A</fullName>
        <shortName evidence="1">PRI</shortName>
    </alternativeName>
</protein>